<comment type="function">
    <text evidence="1">Catalyzes the reversible cleavage of pseudouridine 5'-phosphate (PsiMP) to ribose 5-phosphate and uracil. Functions biologically in the cleavage direction, as part of a pseudouridine degradation pathway.</text>
</comment>
<comment type="catalytic activity">
    <reaction evidence="1">
        <text>D-ribose 5-phosphate + uracil = psi-UMP + H2O</text>
        <dbReference type="Rhea" id="RHEA:18337"/>
        <dbReference type="ChEBI" id="CHEBI:15377"/>
        <dbReference type="ChEBI" id="CHEBI:17568"/>
        <dbReference type="ChEBI" id="CHEBI:58380"/>
        <dbReference type="ChEBI" id="CHEBI:78346"/>
        <dbReference type="EC" id="4.2.1.70"/>
    </reaction>
</comment>
<comment type="cofactor">
    <cofactor evidence="1">
        <name>Mn(2+)</name>
        <dbReference type="ChEBI" id="CHEBI:29035"/>
    </cofactor>
    <text evidence="1">Binds 1 Mn(2+) ion per subunit.</text>
</comment>
<comment type="subunit">
    <text evidence="1">Homotrimer.</text>
</comment>
<comment type="similarity">
    <text evidence="1">Belongs to the pseudouridine-5'-phosphate glycosidase family.</text>
</comment>
<dbReference type="EC" id="4.2.1.70" evidence="1"/>
<dbReference type="EMBL" id="CP000113">
    <property type="protein sequence ID" value="ABF92641.1"/>
    <property type="molecule type" value="Genomic_DNA"/>
</dbReference>
<dbReference type="RefSeq" id="WP_011553370.1">
    <property type="nucleotide sequence ID" value="NC_008095.1"/>
</dbReference>
<dbReference type="SMR" id="Q1D739"/>
<dbReference type="STRING" id="246197.MXAN_3335"/>
<dbReference type="EnsemblBacteria" id="ABF92641">
    <property type="protein sequence ID" value="ABF92641"/>
    <property type="gene ID" value="MXAN_3335"/>
</dbReference>
<dbReference type="GeneID" id="41360688"/>
<dbReference type="KEGG" id="mxa:MXAN_3335"/>
<dbReference type="eggNOG" id="COG2313">
    <property type="taxonomic scope" value="Bacteria"/>
</dbReference>
<dbReference type="HOGENOM" id="CLU_012201_0_1_7"/>
<dbReference type="OrthoDB" id="9805870at2"/>
<dbReference type="Proteomes" id="UP000002402">
    <property type="component" value="Chromosome"/>
</dbReference>
<dbReference type="GO" id="GO:0005737">
    <property type="term" value="C:cytoplasm"/>
    <property type="evidence" value="ECO:0007669"/>
    <property type="project" value="TreeGrafter"/>
</dbReference>
<dbReference type="GO" id="GO:0016798">
    <property type="term" value="F:hydrolase activity, acting on glycosyl bonds"/>
    <property type="evidence" value="ECO:0007669"/>
    <property type="project" value="UniProtKB-KW"/>
</dbReference>
<dbReference type="GO" id="GO:0046872">
    <property type="term" value="F:metal ion binding"/>
    <property type="evidence" value="ECO:0007669"/>
    <property type="project" value="UniProtKB-KW"/>
</dbReference>
<dbReference type="GO" id="GO:0004730">
    <property type="term" value="F:pseudouridylate synthase activity"/>
    <property type="evidence" value="ECO:0007669"/>
    <property type="project" value="UniProtKB-UniRule"/>
</dbReference>
<dbReference type="GO" id="GO:0046113">
    <property type="term" value="P:nucleobase catabolic process"/>
    <property type="evidence" value="ECO:0007669"/>
    <property type="project" value="UniProtKB-UniRule"/>
</dbReference>
<dbReference type="Gene3D" id="3.40.1790.10">
    <property type="entry name" value="Indigoidine synthase domain"/>
    <property type="match status" value="1"/>
</dbReference>
<dbReference type="HAMAP" id="MF_01876">
    <property type="entry name" value="PsiMP_glycosidase"/>
    <property type="match status" value="1"/>
</dbReference>
<dbReference type="InterPro" id="IPR022830">
    <property type="entry name" value="Indigdn_synthA-like"/>
</dbReference>
<dbReference type="InterPro" id="IPR007342">
    <property type="entry name" value="PsuG"/>
</dbReference>
<dbReference type="PANTHER" id="PTHR42909:SF1">
    <property type="entry name" value="CARBOHYDRATE KINASE PFKB DOMAIN-CONTAINING PROTEIN"/>
    <property type="match status" value="1"/>
</dbReference>
<dbReference type="PANTHER" id="PTHR42909">
    <property type="entry name" value="ZGC:136858"/>
    <property type="match status" value="1"/>
</dbReference>
<dbReference type="Pfam" id="PF04227">
    <property type="entry name" value="Indigoidine_A"/>
    <property type="match status" value="1"/>
</dbReference>
<dbReference type="SUPFAM" id="SSF110581">
    <property type="entry name" value="Indigoidine synthase A-like"/>
    <property type="match status" value="1"/>
</dbReference>
<name>PSUG_MYXXD</name>
<protein>
    <recommendedName>
        <fullName evidence="1">Pseudouridine-5'-phosphate glycosidase</fullName>
        <shortName evidence="1">PsiMP glycosidase</shortName>
        <ecNumber evidence="1">4.2.1.70</ecNumber>
    </recommendedName>
</protein>
<proteinExistence type="inferred from homology"/>
<reference key="1">
    <citation type="journal article" date="2006" name="Proc. Natl. Acad. Sci. U.S.A.">
        <title>Evolution of sensory complexity recorded in a myxobacterial genome.</title>
        <authorList>
            <person name="Goldman B.S."/>
            <person name="Nierman W.C."/>
            <person name="Kaiser D."/>
            <person name="Slater S.C."/>
            <person name="Durkin A.S."/>
            <person name="Eisen J.A."/>
            <person name="Ronning C.M."/>
            <person name="Barbazuk W.B."/>
            <person name="Blanchard M."/>
            <person name="Field C."/>
            <person name="Halling C."/>
            <person name="Hinkle G."/>
            <person name="Iartchuk O."/>
            <person name="Kim H.S."/>
            <person name="Mackenzie C."/>
            <person name="Madupu R."/>
            <person name="Miller N."/>
            <person name="Shvartsbeyn A."/>
            <person name="Sullivan S.A."/>
            <person name="Vaudin M."/>
            <person name="Wiegand R."/>
            <person name="Kaplan H.B."/>
        </authorList>
    </citation>
    <scope>NUCLEOTIDE SEQUENCE [LARGE SCALE GENOMIC DNA]</scope>
    <source>
        <strain>DK1622</strain>
    </source>
</reference>
<evidence type="ECO:0000255" key="1">
    <source>
        <dbReference type="HAMAP-Rule" id="MF_01876"/>
    </source>
</evidence>
<feature type="chain" id="PRO_0000390531" description="Pseudouridine-5'-phosphate glycosidase">
    <location>
        <begin position="1"/>
        <end position="303"/>
    </location>
</feature>
<feature type="active site" description="Proton donor" evidence="1">
    <location>
        <position position="23"/>
    </location>
</feature>
<feature type="active site" description="Nucleophile" evidence="1">
    <location>
        <position position="158"/>
    </location>
</feature>
<feature type="binding site" evidence="1">
    <location>
        <position position="85"/>
    </location>
    <ligand>
        <name>substrate</name>
    </ligand>
</feature>
<feature type="binding site" evidence="1">
    <location>
        <position position="105"/>
    </location>
    <ligand>
        <name>substrate</name>
    </ligand>
</feature>
<feature type="binding site" evidence="1">
    <location>
        <position position="137"/>
    </location>
    <ligand>
        <name>Mn(2+)</name>
        <dbReference type="ChEBI" id="CHEBI:29035"/>
    </ligand>
</feature>
<feature type="binding site" evidence="1">
    <location>
        <begin position="139"/>
        <end position="141"/>
    </location>
    <ligand>
        <name>substrate</name>
    </ligand>
</feature>
<gene>
    <name evidence="1" type="primary">psuG</name>
    <name type="ordered locus">MXAN_3335</name>
</gene>
<keyword id="KW-0326">Glycosidase</keyword>
<keyword id="KW-0378">Hydrolase</keyword>
<keyword id="KW-0456">Lyase</keyword>
<keyword id="KW-0464">Manganese</keyword>
<keyword id="KW-0479">Metal-binding</keyword>
<keyword id="KW-1185">Reference proteome</keyword>
<accession>Q1D739</accession>
<organism>
    <name type="scientific">Myxococcus xanthus (strain DK1622)</name>
    <dbReference type="NCBI Taxonomy" id="246197"/>
    <lineage>
        <taxon>Bacteria</taxon>
        <taxon>Pseudomonadati</taxon>
        <taxon>Myxococcota</taxon>
        <taxon>Myxococcia</taxon>
        <taxon>Myxococcales</taxon>
        <taxon>Cystobacterineae</taxon>
        <taxon>Myxococcaceae</taxon>
        <taxon>Myxococcus</taxon>
    </lineage>
</organism>
<sequence>MDLRFSEEVRRALEAGQPLVALETSVVAQGLPYPDNLAAARACEEAIRRAGAVPAATAIIDGQLCVGLEEPEMRRLAEGKERLLKVASRDFAVAMATRATGGTTVSATCEMAAAAGIRVFSTGGIGGVHRGASEHFDISQDIAALARFPVAVVCAGAKSVLDLPKTMELLETAGVPVIGVGTDELPSFYSRGSGIPLEHRADDVDTAARIARARFESLKQGGVLYTVPPPEETSLPRNEVELHIAATLADADRQGIRGKAVTPFLLSEMAKRTGGKTLKANLALLTNNARFAGQLAVAYARAS</sequence>